<protein>
    <recommendedName>
        <fullName>HTH-type transcriptional regulator EthR</fullName>
    </recommendedName>
</protein>
<keyword id="KW-0238">DNA-binding</keyword>
<keyword id="KW-1185">Reference proteome</keyword>
<keyword id="KW-0678">Repressor</keyword>
<keyword id="KW-0804">Transcription</keyword>
<keyword id="KW-0805">Transcription regulation</keyword>
<proteinExistence type="evidence at protein level"/>
<gene>
    <name type="primary">ethR</name>
    <name type="ordered locus">BQ2027_MB3885</name>
</gene>
<name>ETHR_MYCBO</name>
<accession>Q7TVI1</accession>
<accession>A0A1R3Y5G6</accession>
<accession>X2BPH1</accession>
<reference key="1">
    <citation type="journal article" date="2003" name="Proc. Natl. Acad. Sci. U.S.A.">
        <title>The complete genome sequence of Mycobacterium bovis.</title>
        <authorList>
            <person name="Garnier T."/>
            <person name="Eiglmeier K."/>
            <person name="Camus J.-C."/>
            <person name="Medina N."/>
            <person name="Mansoor H."/>
            <person name="Pryor M."/>
            <person name="Duthoy S."/>
            <person name="Grondin S."/>
            <person name="Lacroix C."/>
            <person name="Monsempe C."/>
            <person name="Simon S."/>
            <person name="Harris B."/>
            <person name="Atkin R."/>
            <person name="Doggett J."/>
            <person name="Mayes R."/>
            <person name="Keating L."/>
            <person name="Wheeler P.R."/>
            <person name="Parkhill J."/>
            <person name="Barrell B.G."/>
            <person name="Cole S.T."/>
            <person name="Gordon S.V."/>
            <person name="Hewinson R.G."/>
        </authorList>
    </citation>
    <scope>NUCLEOTIDE SEQUENCE [LARGE SCALE GENOMIC DNA]</scope>
    <source>
        <strain>ATCC BAA-935 / AF2122/97</strain>
    </source>
</reference>
<reference key="2">
    <citation type="journal article" date="2017" name="Genome Announc.">
        <title>Updated reference genome sequence and annotation of Mycobacterium bovis AF2122/97.</title>
        <authorList>
            <person name="Malone K.M."/>
            <person name="Farrell D."/>
            <person name="Stuber T.P."/>
            <person name="Schubert O.T."/>
            <person name="Aebersold R."/>
            <person name="Robbe-Austerman S."/>
            <person name="Gordon S.V."/>
        </authorList>
    </citation>
    <scope>NUCLEOTIDE SEQUENCE [LARGE SCALE GENOMIC DNA]</scope>
    <scope>GENOME REANNOTATION</scope>
    <source>
        <strain>ATCC BAA-935 / AF2122/97</strain>
    </source>
</reference>
<reference key="3">
    <citation type="journal article" date="2000" name="J. Biol. Chem.">
        <title>Activation of the pro-drug ethionamide is regulated in mycobacteria.</title>
        <authorList>
            <person name="Baulard A.R."/>
            <person name="Betts J.C."/>
            <person name="Engohang-Ndong J."/>
            <person name="Quan S."/>
            <person name="McAdam R.A."/>
            <person name="Brennan P.J."/>
            <person name="Locht C."/>
            <person name="Besra G.S."/>
        </authorList>
    </citation>
    <scope>FUNCTION AS A REPRESSOR ETHA</scope>
    <scope>DISRUPTION PHENOTYPE</scope>
</reference>
<evidence type="ECO:0000250" key="1"/>
<evidence type="ECO:0000255" key="2">
    <source>
        <dbReference type="PROSITE-ProRule" id="PRU00335"/>
    </source>
</evidence>
<evidence type="ECO:0000256" key="3">
    <source>
        <dbReference type="SAM" id="MobiDB-lite"/>
    </source>
</evidence>
<evidence type="ECO:0000269" key="4">
    <source>
    </source>
</evidence>
<organism>
    <name type="scientific">Mycobacterium bovis (strain ATCC BAA-935 / AF2122/97)</name>
    <dbReference type="NCBI Taxonomy" id="233413"/>
    <lineage>
        <taxon>Bacteria</taxon>
        <taxon>Bacillati</taxon>
        <taxon>Actinomycetota</taxon>
        <taxon>Actinomycetes</taxon>
        <taxon>Mycobacteriales</taxon>
        <taxon>Mycobacteriaceae</taxon>
        <taxon>Mycobacterium</taxon>
        <taxon>Mycobacterium tuberculosis complex</taxon>
    </lineage>
</organism>
<feature type="chain" id="PRO_0000398579" description="HTH-type transcriptional regulator EthR">
    <location>
        <begin position="1"/>
        <end position="216"/>
    </location>
</feature>
<feature type="domain" description="HTH tetR-type" evidence="2">
    <location>
        <begin position="23"/>
        <end position="83"/>
    </location>
</feature>
<feature type="DNA-binding region" description="H-T-H motif" evidence="2">
    <location>
        <begin position="46"/>
        <end position="65"/>
    </location>
</feature>
<feature type="region of interest" description="Disordered" evidence="3">
    <location>
        <begin position="1"/>
        <end position="24"/>
    </location>
</feature>
<feature type="compositionally biased region" description="Polar residues" evidence="3">
    <location>
        <begin position="1"/>
        <end position="10"/>
    </location>
</feature>
<feature type="site" description="Inhibitor-binding" evidence="1">
    <location>
        <position position="176"/>
    </location>
</feature>
<feature type="site" description="Inhibitor-binding" evidence="1">
    <location>
        <position position="179"/>
    </location>
</feature>
<comment type="function">
    <text evidence="4">Involved in the repression of the monooxygenase EthA which is responsible of the formation of the active metabolite of ethionamide (ETH).</text>
</comment>
<comment type="subunit">
    <text evidence="1">Homodimer.</text>
</comment>
<comment type="disruption phenotype">
    <text evidence="4">Cells lacking this gene leads to ETH hypersentivity.</text>
</comment>
<sequence>MTTSAASQASLPRGRRTARPSGDDRELAILATAENLLEDRPLADISVDDLAKGAGISRPTFYFYFPSKEAVLLTLLDRVVNQADMALQTLAENPADTDRENMWRTGINVFFETFGSHKAVTRAGQAARATSVEVAELWSTFMQKWIAYTAAVIDAERDRGAAPRTLPAHELATALNLMNERTLFASFAGEQPSVPEARVLDTLVHIWVTSIYGENR</sequence>
<dbReference type="EMBL" id="LT708304">
    <property type="protein sequence ID" value="SIU02517.1"/>
    <property type="molecule type" value="Genomic_DNA"/>
</dbReference>
<dbReference type="RefSeq" id="NP_857522.1">
    <property type="nucleotide sequence ID" value="NC_002945.3"/>
</dbReference>
<dbReference type="RefSeq" id="WP_003399797.1">
    <property type="nucleotide sequence ID" value="NC_002945.4"/>
</dbReference>
<dbReference type="SMR" id="Q7TVI1"/>
<dbReference type="GeneID" id="45427859"/>
<dbReference type="KEGG" id="mbo:BQ2027_MB3885"/>
<dbReference type="PATRIC" id="fig|233413.5.peg.4256"/>
<dbReference type="Proteomes" id="UP000001419">
    <property type="component" value="Chromosome"/>
</dbReference>
<dbReference type="GO" id="GO:0003700">
    <property type="term" value="F:DNA-binding transcription factor activity"/>
    <property type="evidence" value="ECO:0007669"/>
    <property type="project" value="TreeGrafter"/>
</dbReference>
<dbReference type="GO" id="GO:0000976">
    <property type="term" value="F:transcription cis-regulatory region binding"/>
    <property type="evidence" value="ECO:0007669"/>
    <property type="project" value="TreeGrafter"/>
</dbReference>
<dbReference type="GO" id="GO:0045892">
    <property type="term" value="P:negative regulation of DNA-templated transcription"/>
    <property type="evidence" value="ECO:0000315"/>
    <property type="project" value="UniProtKB"/>
</dbReference>
<dbReference type="FunFam" id="1.10.357.10:FF:000027">
    <property type="entry name" value="HTH-type transcriptional regulator EthR"/>
    <property type="match status" value="1"/>
</dbReference>
<dbReference type="FunFam" id="1.10.10.60:FF:000141">
    <property type="entry name" value="TetR family transcriptional regulator"/>
    <property type="match status" value="1"/>
</dbReference>
<dbReference type="Gene3D" id="1.10.10.60">
    <property type="entry name" value="Homeodomain-like"/>
    <property type="match status" value="1"/>
</dbReference>
<dbReference type="Gene3D" id="1.10.357.10">
    <property type="entry name" value="Tetracycline Repressor, domain 2"/>
    <property type="match status" value="1"/>
</dbReference>
<dbReference type="InterPro" id="IPR049397">
    <property type="entry name" value="EthR_C"/>
</dbReference>
<dbReference type="InterPro" id="IPR009057">
    <property type="entry name" value="Homeodomain-like_sf"/>
</dbReference>
<dbReference type="InterPro" id="IPR050109">
    <property type="entry name" value="HTH-type_TetR-like_transc_reg"/>
</dbReference>
<dbReference type="InterPro" id="IPR001647">
    <property type="entry name" value="HTH_TetR"/>
</dbReference>
<dbReference type="InterPro" id="IPR036271">
    <property type="entry name" value="Tet_transcr_reg_TetR-rel_C_sf"/>
</dbReference>
<dbReference type="PANTHER" id="PTHR30055:SF184">
    <property type="entry name" value="HTH-TYPE TRANSCRIPTIONAL REGULATOR ETHR"/>
    <property type="match status" value="1"/>
</dbReference>
<dbReference type="PANTHER" id="PTHR30055">
    <property type="entry name" value="HTH-TYPE TRANSCRIPTIONAL REGULATOR RUTR"/>
    <property type="match status" value="1"/>
</dbReference>
<dbReference type="Pfam" id="PF21313">
    <property type="entry name" value="EthR_C"/>
    <property type="match status" value="1"/>
</dbReference>
<dbReference type="Pfam" id="PF00440">
    <property type="entry name" value="TetR_N"/>
    <property type="match status" value="1"/>
</dbReference>
<dbReference type="PRINTS" id="PR00455">
    <property type="entry name" value="HTHTETR"/>
</dbReference>
<dbReference type="SUPFAM" id="SSF46689">
    <property type="entry name" value="Homeodomain-like"/>
    <property type="match status" value="1"/>
</dbReference>
<dbReference type="SUPFAM" id="SSF48498">
    <property type="entry name" value="Tetracyclin repressor-like, C-terminal domain"/>
    <property type="match status" value="1"/>
</dbReference>
<dbReference type="PROSITE" id="PS50977">
    <property type="entry name" value="HTH_TETR_2"/>
    <property type="match status" value="1"/>
</dbReference>